<dbReference type="EMBL" id="DQ383815">
    <property type="protein sequence ID" value="ABD47157.1"/>
    <property type="molecule type" value="Genomic_DNA"/>
</dbReference>
<dbReference type="RefSeq" id="YP_588128.1">
    <property type="nucleotide sequence ID" value="NC_007977.1"/>
</dbReference>
<dbReference type="EnsemblPlants" id="mRNA:HanXRQr2_Chr02g0061571">
    <property type="protein sequence ID" value="CDS:HanXRQr2_Chr02g0061571.1"/>
    <property type="gene ID" value="HanXRQr2_Chr02g0061571"/>
</dbReference>
<dbReference type="EnsemblPlants" id="mRNA:HanXRQr2_Chr11g0496421">
    <property type="protein sequence ID" value="CDS:HanXRQr2_Chr11g0496421.1"/>
    <property type="gene ID" value="HanXRQr2_Chr11g0496421"/>
</dbReference>
<dbReference type="GeneID" id="4055659"/>
<dbReference type="Gramene" id="mRNA:HanXRQr2_Chr02g0061571">
    <property type="protein sequence ID" value="CDS:HanXRQr2_Chr02g0061571.1"/>
    <property type="gene ID" value="HanXRQr2_Chr02g0061571"/>
</dbReference>
<dbReference type="Gramene" id="mRNA:HanXRQr2_Chr11g0496421">
    <property type="protein sequence ID" value="CDS:HanXRQr2_Chr11g0496421.1"/>
    <property type="gene ID" value="HanXRQr2_Chr11g0496421"/>
</dbReference>
<dbReference type="KEGG" id="han:4055659"/>
<dbReference type="OrthoDB" id="1414221at2759"/>
<dbReference type="PhylomeDB" id="Q1KXU8"/>
<dbReference type="GO" id="GO:0009535">
    <property type="term" value="C:chloroplast thylakoid membrane"/>
    <property type="evidence" value="ECO:0007669"/>
    <property type="project" value="UniProtKB-SubCell"/>
</dbReference>
<dbReference type="GO" id="GO:0009522">
    <property type="term" value="C:photosystem I"/>
    <property type="evidence" value="ECO:0007669"/>
    <property type="project" value="InterPro"/>
</dbReference>
<dbReference type="GO" id="GO:0015979">
    <property type="term" value="P:photosynthesis"/>
    <property type="evidence" value="ECO:0007669"/>
    <property type="project" value="UniProtKB-UniRule"/>
</dbReference>
<dbReference type="HAMAP" id="MF_00437">
    <property type="entry name" value="Ycf4"/>
    <property type="match status" value="1"/>
</dbReference>
<dbReference type="InterPro" id="IPR003359">
    <property type="entry name" value="PSI_Ycf4_assembly"/>
</dbReference>
<dbReference type="PANTHER" id="PTHR33288">
    <property type="match status" value="1"/>
</dbReference>
<dbReference type="PANTHER" id="PTHR33288:SF4">
    <property type="entry name" value="PHOTOSYSTEM I ASSEMBLY PROTEIN YCF4"/>
    <property type="match status" value="1"/>
</dbReference>
<dbReference type="Pfam" id="PF02392">
    <property type="entry name" value="Ycf4"/>
    <property type="match status" value="1"/>
</dbReference>
<proteinExistence type="inferred from homology"/>
<evidence type="ECO:0000255" key="1">
    <source>
        <dbReference type="HAMAP-Rule" id="MF_00437"/>
    </source>
</evidence>
<organism>
    <name type="scientific">Helianthus annuus</name>
    <name type="common">Common sunflower</name>
    <dbReference type="NCBI Taxonomy" id="4232"/>
    <lineage>
        <taxon>Eukaryota</taxon>
        <taxon>Viridiplantae</taxon>
        <taxon>Streptophyta</taxon>
        <taxon>Embryophyta</taxon>
        <taxon>Tracheophyta</taxon>
        <taxon>Spermatophyta</taxon>
        <taxon>Magnoliopsida</taxon>
        <taxon>eudicotyledons</taxon>
        <taxon>Gunneridae</taxon>
        <taxon>Pentapetalae</taxon>
        <taxon>asterids</taxon>
        <taxon>campanulids</taxon>
        <taxon>Asterales</taxon>
        <taxon>Asteraceae</taxon>
        <taxon>Asteroideae</taxon>
        <taxon>Heliantheae alliance</taxon>
        <taxon>Heliantheae</taxon>
        <taxon>Helianthus</taxon>
    </lineage>
</organism>
<feature type="chain" id="PRO_0000275657" description="Photosystem I assembly protein Ycf4">
    <location>
        <begin position="1"/>
        <end position="184"/>
    </location>
</feature>
<feature type="transmembrane region" description="Helical" evidence="1">
    <location>
        <begin position="22"/>
        <end position="42"/>
    </location>
</feature>
<feature type="transmembrane region" description="Helical" evidence="1">
    <location>
        <begin position="57"/>
        <end position="77"/>
    </location>
</feature>
<comment type="function">
    <text evidence="1">Seems to be required for the assembly of the photosystem I complex.</text>
</comment>
<comment type="subcellular location">
    <subcellularLocation>
        <location evidence="1">Plastid</location>
        <location evidence="1">Chloroplast thylakoid membrane</location>
        <topology evidence="1">Multi-pass membrane protein</topology>
    </subcellularLocation>
</comment>
<comment type="similarity">
    <text evidence="1">Belongs to the Ycf4 family.</text>
</comment>
<name>YCF4_HELAN</name>
<sequence length="184" mass="21218">MSCRSEHIWIEPIKGARKTSNFCWAIILFLGSLGFLLVGTSSYLGRNLISLFPSQEIVFFPQGIVMSFYGIAGLFISSYLWCTISWNVGSGYDRFDIKDGIVCIFRWGFPGKNRRVFLRFLIKDIQSVRIEVKEGIYARRVLYMDIRGQGAIPLTRTDENFTPREMEQKAAELAYFLRVPIEVF</sequence>
<protein>
    <recommendedName>
        <fullName evidence="1">Photosystem I assembly protein Ycf4</fullName>
    </recommendedName>
</protein>
<keyword id="KW-0150">Chloroplast</keyword>
<keyword id="KW-0472">Membrane</keyword>
<keyword id="KW-0602">Photosynthesis</keyword>
<keyword id="KW-0934">Plastid</keyword>
<keyword id="KW-0793">Thylakoid</keyword>
<keyword id="KW-0812">Transmembrane</keyword>
<keyword id="KW-1133">Transmembrane helix</keyword>
<reference key="1">
    <citation type="submission" date="2006-01" db="EMBL/GenBank/DDBJ databases">
        <title>A comparison of the first two published chloroplast genomes in Asteraceae: Lactuca and Helianthus.</title>
        <authorList>
            <person name="Timme R.E."/>
            <person name="Kuehl J.V."/>
            <person name="Boore J.L."/>
            <person name="Jansen R.K."/>
        </authorList>
    </citation>
    <scope>NUCLEOTIDE SEQUENCE [LARGE SCALE GENOMIC DNA]</scope>
    <source>
        <strain>cv. HA383</strain>
    </source>
</reference>
<accession>Q1KXU8</accession>
<geneLocation type="chloroplast"/>
<gene>
    <name evidence="1" type="primary">ycf4</name>
</gene>